<sequence length="439" mass="49924">MTDIFEKCKRTHYSNEIGPELAGETVKVTGWVHEIRDLGGIVFVLIRDKNGITQLTAPSKKLSEEMMADVRAARKETIITLTGTVQESAKAPNGVEIIPSNIDVINVSQLPLPLDTTEKVEAEMDTRLDSRFMDLRKHDVSAIFKIKSQMLHTARNYFYDNDFTEITTPKLVASATEGGTELFPITYFEKEAFLGQSPQLYKQMMMATGLDNVFEIGQIFRAEEHDTLRHLNEALSIDAEMSFKSQTDAMNTLEELIKRILSDISTNCQKELSDLDHELDIPTEPFPIVTYEEVIDIVNSRDVEMNYGEDLNRAAEKVLGETMGSYYFITEWPTAIKPFYVMPNSDDAEKSTAFDLMYRDLELSSGAQRIHDYDLLYSQIEAKDLNPDSFEKYLQAFKYGMPPHSGWGMGADRLTMVITGAKNIRETVLFPRDRRRLTP</sequence>
<gene>
    <name evidence="1" type="primary">aspS</name>
    <name type="ordered locus">Msp_0135</name>
</gene>
<comment type="function">
    <text evidence="1">Aspartyl-tRNA synthetase with relaxed tRNA specificity since it is able to aspartylate not only its cognate tRNA(Asp) but also tRNA(Asn). Reaction proceeds in two steps: L-aspartate is first activated by ATP to form Asp-AMP and then transferred to the acceptor end of tRNA(Asp/Asn).</text>
</comment>
<comment type="catalytic activity">
    <reaction evidence="1">
        <text>tRNA(Asx) + L-aspartate + ATP = L-aspartyl-tRNA(Asx) + AMP + diphosphate</text>
        <dbReference type="Rhea" id="RHEA:18349"/>
        <dbReference type="Rhea" id="RHEA-COMP:9710"/>
        <dbReference type="Rhea" id="RHEA-COMP:9711"/>
        <dbReference type="ChEBI" id="CHEBI:29991"/>
        <dbReference type="ChEBI" id="CHEBI:30616"/>
        <dbReference type="ChEBI" id="CHEBI:33019"/>
        <dbReference type="ChEBI" id="CHEBI:78442"/>
        <dbReference type="ChEBI" id="CHEBI:78516"/>
        <dbReference type="ChEBI" id="CHEBI:456215"/>
        <dbReference type="EC" id="6.1.1.23"/>
    </reaction>
</comment>
<comment type="cofactor">
    <cofactor evidence="1">
        <name>Mg(2+)</name>
        <dbReference type="ChEBI" id="CHEBI:18420"/>
    </cofactor>
    <text evidence="1">Binds 3 Mg(2+) cations per subunit. The strongest magnesium site (Mg1) is bound to the beta- and gamma-phosphates of ATP and four water molecules complete its coordination sphere.</text>
</comment>
<comment type="subunit">
    <text evidence="1">Homodimer.</text>
</comment>
<comment type="subcellular location">
    <subcellularLocation>
        <location evidence="1">Cytoplasm</location>
    </subcellularLocation>
</comment>
<comment type="similarity">
    <text evidence="1">Belongs to the class-II aminoacyl-tRNA synthetase family. Type 2 subfamily.</text>
</comment>
<reference key="1">
    <citation type="journal article" date="2006" name="J. Bacteriol.">
        <title>The genome sequence of Methanosphaera stadtmanae reveals why this human intestinal archaeon is restricted to methanol and H2 for methane formation and ATP synthesis.</title>
        <authorList>
            <person name="Fricke W.F."/>
            <person name="Seedorf H."/>
            <person name="Henne A."/>
            <person name="Kruer M."/>
            <person name="Liesegang H."/>
            <person name="Hedderich R."/>
            <person name="Gottschalk G."/>
            <person name="Thauer R.K."/>
        </authorList>
    </citation>
    <scope>NUCLEOTIDE SEQUENCE [LARGE SCALE GENOMIC DNA]</scope>
    <source>
        <strain>ATCC 43021 / DSM 3091 / JCM 11832 / MCB-3</strain>
    </source>
</reference>
<organism>
    <name type="scientific">Methanosphaera stadtmanae (strain ATCC 43021 / DSM 3091 / JCM 11832 / MCB-3)</name>
    <dbReference type="NCBI Taxonomy" id="339860"/>
    <lineage>
        <taxon>Archaea</taxon>
        <taxon>Methanobacteriati</taxon>
        <taxon>Methanobacteriota</taxon>
        <taxon>Methanomada group</taxon>
        <taxon>Methanobacteria</taxon>
        <taxon>Methanobacteriales</taxon>
        <taxon>Methanobacteriaceae</taxon>
        <taxon>Methanosphaera</taxon>
    </lineage>
</organism>
<proteinExistence type="inferred from homology"/>
<name>SYDND_METST</name>
<dbReference type="EC" id="6.1.1.23" evidence="1"/>
<dbReference type="EMBL" id="CP000102">
    <property type="protein sequence ID" value="ABC56553.1"/>
    <property type="molecule type" value="Genomic_DNA"/>
</dbReference>
<dbReference type="RefSeq" id="WP_011405752.1">
    <property type="nucleotide sequence ID" value="NC_007681.1"/>
</dbReference>
<dbReference type="SMR" id="Q2NHT0"/>
<dbReference type="STRING" id="339860.Msp_0135"/>
<dbReference type="GeneID" id="41324707"/>
<dbReference type="KEGG" id="mst:Msp_0135"/>
<dbReference type="eggNOG" id="arCOG00406">
    <property type="taxonomic scope" value="Archaea"/>
</dbReference>
<dbReference type="HOGENOM" id="CLU_004553_2_1_2"/>
<dbReference type="OrthoDB" id="5908at2157"/>
<dbReference type="Proteomes" id="UP000001931">
    <property type="component" value="Chromosome"/>
</dbReference>
<dbReference type="GO" id="GO:0017101">
    <property type="term" value="C:aminoacyl-tRNA synthetase multienzyme complex"/>
    <property type="evidence" value="ECO:0007669"/>
    <property type="project" value="TreeGrafter"/>
</dbReference>
<dbReference type="GO" id="GO:0005829">
    <property type="term" value="C:cytosol"/>
    <property type="evidence" value="ECO:0007669"/>
    <property type="project" value="TreeGrafter"/>
</dbReference>
<dbReference type="GO" id="GO:0004815">
    <property type="term" value="F:aspartate-tRNA ligase activity"/>
    <property type="evidence" value="ECO:0007669"/>
    <property type="project" value="UniProtKB-UniRule"/>
</dbReference>
<dbReference type="GO" id="GO:0050560">
    <property type="term" value="F:aspartate-tRNA(Asn) ligase activity"/>
    <property type="evidence" value="ECO:0007669"/>
    <property type="project" value="UniProtKB-EC"/>
</dbReference>
<dbReference type="GO" id="GO:0005524">
    <property type="term" value="F:ATP binding"/>
    <property type="evidence" value="ECO:0007669"/>
    <property type="project" value="UniProtKB-UniRule"/>
</dbReference>
<dbReference type="GO" id="GO:0000287">
    <property type="term" value="F:magnesium ion binding"/>
    <property type="evidence" value="ECO:0007669"/>
    <property type="project" value="UniProtKB-UniRule"/>
</dbReference>
<dbReference type="GO" id="GO:0003723">
    <property type="term" value="F:RNA binding"/>
    <property type="evidence" value="ECO:0007669"/>
    <property type="project" value="TreeGrafter"/>
</dbReference>
<dbReference type="GO" id="GO:0006422">
    <property type="term" value="P:aspartyl-tRNA aminoacylation"/>
    <property type="evidence" value="ECO:0007669"/>
    <property type="project" value="UniProtKB-UniRule"/>
</dbReference>
<dbReference type="CDD" id="cd00776">
    <property type="entry name" value="AsxRS_core"/>
    <property type="match status" value="1"/>
</dbReference>
<dbReference type="CDD" id="cd04316">
    <property type="entry name" value="ND_PkAspRS_like_N"/>
    <property type="match status" value="1"/>
</dbReference>
<dbReference type="FunFam" id="3.30.930.10:FF:000038">
    <property type="entry name" value="Aspartate--tRNA ligase"/>
    <property type="match status" value="1"/>
</dbReference>
<dbReference type="Gene3D" id="3.30.930.10">
    <property type="entry name" value="Bira Bifunctional Protein, Domain 2"/>
    <property type="match status" value="1"/>
</dbReference>
<dbReference type="Gene3D" id="2.40.50.140">
    <property type="entry name" value="Nucleic acid-binding proteins"/>
    <property type="match status" value="1"/>
</dbReference>
<dbReference type="HAMAP" id="MF_02075">
    <property type="entry name" value="Asp_tRNA_synth_type2"/>
    <property type="match status" value="1"/>
</dbReference>
<dbReference type="InterPro" id="IPR004364">
    <property type="entry name" value="Aa-tRNA-synt_II"/>
</dbReference>
<dbReference type="InterPro" id="IPR006195">
    <property type="entry name" value="aa-tRNA-synth_II"/>
</dbReference>
<dbReference type="InterPro" id="IPR045864">
    <property type="entry name" value="aa-tRNA-synth_II/BPL/LPL"/>
</dbReference>
<dbReference type="InterPro" id="IPR004523">
    <property type="entry name" value="Asp-tRNA_synthase_2"/>
</dbReference>
<dbReference type="InterPro" id="IPR002312">
    <property type="entry name" value="Asp/Asn-tRNA-synth_IIb"/>
</dbReference>
<dbReference type="InterPro" id="IPR012340">
    <property type="entry name" value="NA-bd_OB-fold"/>
</dbReference>
<dbReference type="InterPro" id="IPR004365">
    <property type="entry name" value="NA-bd_OB_tRNA"/>
</dbReference>
<dbReference type="NCBIfam" id="TIGR00458">
    <property type="entry name" value="aspS_nondisc"/>
    <property type="match status" value="1"/>
</dbReference>
<dbReference type="NCBIfam" id="NF003483">
    <property type="entry name" value="PRK05159.1"/>
    <property type="match status" value="1"/>
</dbReference>
<dbReference type="PANTHER" id="PTHR43450:SF1">
    <property type="entry name" value="ASPARTATE--TRNA LIGASE, CYTOPLASMIC"/>
    <property type="match status" value="1"/>
</dbReference>
<dbReference type="PANTHER" id="PTHR43450">
    <property type="entry name" value="ASPARTYL-TRNA SYNTHETASE"/>
    <property type="match status" value="1"/>
</dbReference>
<dbReference type="Pfam" id="PF00152">
    <property type="entry name" value="tRNA-synt_2"/>
    <property type="match status" value="1"/>
</dbReference>
<dbReference type="Pfam" id="PF01336">
    <property type="entry name" value="tRNA_anti-codon"/>
    <property type="match status" value="1"/>
</dbReference>
<dbReference type="PRINTS" id="PR01042">
    <property type="entry name" value="TRNASYNTHASP"/>
</dbReference>
<dbReference type="SUPFAM" id="SSF55681">
    <property type="entry name" value="Class II aaRS and biotin synthetases"/>
    <property type="match status" value="1"/>
</dbReference>
<dbReference type="SUPFAM" id="SSF50249">
    <property type="entry name" value="Nucleic acid-binding proteins"/>
    <property type="match status" value="1"/>
</dbReference>
<dbReference type="PROSITE" id="PS50862">
    <property type="entry name" value="AA_TRNA_LIGASE_II"/>
    <property type="match status" value="1"/>
</dbReference>
<keyword id="KW-0030">Aminoacyl-tRNA synthetase</keyword>
<keyword id="KW-0067">ATP-binding</keyword>
<keyword id="KW-0963">Cytoplasm</keyword>
<keyword id="KW-0436">Ligase</keyword>
<keyword id="KW-0460">Magnesium</keyword>
<keyword id="KW-0479">Metal-binding</keyword>
<keyword id="KW-0547">Nucleotide-binding</keyword>
<keyword id="KW-0648">Protein biosynthesis</keyword>
<keyword id="KW-1185">Reference proteome</keyword>
<feature type="chain" id="PRO_0000235584" description="Aspartate--tRNA(Asp/Asn) ligase">
    <location>
        <begin position="1"/>
        <end position="439"/>
    </location>
</feature>
<feature type="region of interest" description="Aspartate" evidence="1">
    <location>
        <begin position="199"/>
        <end position="202"/>
    </location>
</feature>
<feature type="binding site" evidence="1">
    <location>
        <position position="177"/>
    </location>
    <ligand>
        <name>L-aspartate</name>
        <dbReference type="ChEBI" id="CHEBI:29991"/>
    </ligand>
</feature>
<feature type="binding site" evidence="1">
    <location>
        <begin position="221"/>
        <end position="223"/>
    </location>
    <ligand>
        <name>ATP</name>
        <dbReference type="ChEBI" id="CHEBI:30616"/>
    </ligand>
</feature>
<feature type="binding site" evidence="1">
    <location>
        <position position="221"/>
    </location>
    <ligand>
        <name>L-aspartate</name>
        <dbReference type="ChEBI" id="CHEBI:29991"/>
    </ligand>
</feature>
<feature type="binding site" evidence="1">
    <location>
        <begin position="229"/>
        <end position="231"/>
    </location>
    <ligand>
        <name>ATP</name>
        <dbReference type="ChEBI" id="CHEBI:30616"/>
    </ligand>
</feature>
<feature type="binding site" evidence="1">
    <location>
        <position position="362"/>
    </location>
    <ligand>
        <name>ATP</name>
        <dbReference type="ChEBI" id="CHEBI:30616"/>
    </ligand>
</feature>
<feature type="binding site" evidence="1">
    <location>
        <position position="362"/>
    </location>
    <ligand>
        <name>Mg(2+)</name>
        <dbReference type="ChEBI" id="CHEBI:18420"/>
        <label>2</label>
    </ligand>
</feature>
<feature type="binding site" evidence="1">
    <location>
        <position position="362"/>
    </location>
    <ligand>
        <name>Mg(2+)</name>
        <dbReference type="ChEBI" id="CHEBI:18420"/>
        <label>3</label>
    </ligand>
</feature>
<feature type="binding site" evidence="1">
    <location>
        <position position="365"/>
    </location>
    <ligand>
        <name>L-aspartate</name>
        <dbReference type="ChEBI" id="CHEBI:29991"/>
    </ligand>
</feature>
<feature type="binding site" evidence="1">
    <location>
        <position position="365"/>
    </location>
    <ligand>
        <name>Mg(2+)</name>
        <dbReference type="ChEBI" id="CHEBI:18420"/>
        <label>2</label>
    </ligand>
</feature>
<feature type="binding site" evidence="1">
    <location>
        <position position="369"/>
    </location>
    <ligand>
        <name>L-aspartate</name>
        <dbReference type="ChEBI" id="CHEBI:29991"/>
    </ligand>
</feature>
<feature type="binding site" evidence="1">
    <location>
        <begin position="410"/>
        <end position="413"/>
    </location>
    <ligand>
        <name>ATP</name>
        <dbReference type="ChEBI" id="CHEBI:30616"/>
    </ligand>
</feature>
<feature type="site" description="Important for tRNA non-discrimination" evidence="1">
    <location>
        <position position="92"/>
    </location>
</feature>
<protein>
    <recommendedName>
        <fullName evidence="1">Aspartate--tRNA(Asp/Asn) ligase</fullName>
        <ecNumber evidence="1">6.1.1.23</ecNumber>
    </recommendedName>
    <alternativeName>
        <fullName evidence="1">Aspartyl-tRNA synthetase</fullName>
        <shortName evidence="1">AspRS</shortName>
    </alternativeName>
    <alternativeName>
        <fullName evidence="1">Non-discriminating aspartyl-tRNA synthetase</fullName>
        <shortName evidence="1">ND-AspRS</shortName>
    </alternativeName>
</protein>
<accession>Q2NHT0</accession>
<evidence type="ECO:0000255" key="1">
    <source>
        <dbReference type="HAMAP-Rule" id="MF_02075"/>
    </source>
</evidence>